<comment type="function">
    <text evidence="1">F(1)F(0) ATP synthase produces ATP from ADP in the presence of a proton or sodium gradient. F-type ATPases consist of two structural domains, F(1) containing the extramembraneous catalytic core and F(0) containing the membrane proton channel, linked together by a central stalk and a peripheral stalk. During catalysis, ATP synthesis in the catalytic domain of F(1) is coupled via a rotary mechanism of the central stalk subunits to proton translocation.</text>
</comment>
<comment type="function">
    <text evidence="1">Component of the F(0) channel, it forms part of the peripheral stalk, linking F(1) to F(0).</text>
</comment>
<comment type="subunit">
    <text evidence="1">F-type ATPases have 2 components, F(1) - the catalytic core - and F(0) - the membrane proton channel. F(1) has five subunits: alpha(3), beta(3), gamma(1), delta(1), epsilon(1). F(0) has three main subunits: a(1), b(2) and c(10-14). The alpha and beta chains form an alternating ring which encloses part of the gamma chain. F(1) is attached to F(0) by a central stalk formed by the gamma and epsilon chains, while a peripheral stalk is formed by the delta and b chains.</text>
</comment>
<comment type="subcellular location">
    <subcellularLocation>
        <location evidence="1">Cell inner membrane</location>
        <topology evidence="1">Single-pass membrane protein</topology>
    </subcellularLocation>
</comment>
<comment type="similarity">
    <text evidence="1">Belongs to the ATPase B chain family.</text>
</comment>
<dbReference type="EMBL" id="CP000026">
    <property type="protein sequence ID" value="AAV79500.1"/>
    <property type="molecule type" value="Genomic_DNA"/>
</dbReference>
<dbReference type="RefSeq" id="WP_001052212.1">
    <property type="nucleotide sequence ID" value="NC_006511.1"/>
</dbReference>
<dbReference type="SMR" id="Q5PKW8"/>
<dbReference type="GeneID" id="66758158"/>
<dbReference type="KEGG" id="spt:SPA3708"/>
<dbReference type="HOGENOM" id="CLU_079215_4_5_6"/>
<dbReference type="Proteomes" id="UP000008185">
    <property type="component" value="Chromosome"/>
</dbReference>
<dbReference type="GO" id="GO:0005886">
    <property type="term" value="C:plasma membrane"/>
    <property type="evidence" value="ECO:0007669"/>
    <property type="project" value="UniProtKB-SubCell"/>
</dbReference>
<dbReference type="GO" id="GO:0045259">
    <property type="term" value="C:proton-transporting ATP synthase complex"/>
    <property type="evidence" value="ECO:0007669"/>
    <property type="project" value="UniProtKB-KW"/>
</dbReference>
<dbReference type="GO" id="GO:0046933">
    <property type="term" value="F:proton-transporting ATP synthase activity, rotational mechanism"/>
    <property type="evidence" value="ECO:0007669"/>
    <property type="project" value="UniProtKB-UniRule"/>
</dbReference>
<dbReference type="GO" id="GO:0046961">
    <property type="term" value="F:proton-transporting ATPase activity, rotational mechanism"/>
    <property type="evidence" value="ECO:0007669"/>
    <property type="project" value="TreeGrafter"/>
</dbReference>
<dbReference type="CDD" id="cd06503">
    <property type="entry name" value="ATP-synt_Fo_b"/>
    <property type="match status" value="1"/>
</dbReference>
<dbReference type="FunFam" id="1.20.5.620:FF:000001">
    <property type="entry name" value="ATP synthase subunit b"/>
    <property type="match status" value="1"/>
</dbReference>
<dbReference type="Gene3D" id="1.20.5.620">
    <property type="entry name" value="F1F0 ATP synthase subunit B, membrane domain"/>
    <property type="match status" value="1"/>
</dbReference>
<dbReference type="HAMAP" id="MF_01398">
    <property type="entry name" value="ATP_synth_b_bprime"/>
    <property type="match status" value="1"/>
</dbReference>
<dbReference type="InterPro" id="IPR028987">
    <property type="entry name" value="ATP_synth_B-like_membr_sf"/>
</dbReference>
<dbReference type="InterPro" id="IPR002146">
    <property type="entry name" value="ATP_synth_b/b'su_bac/chlpt"/>
</dbReference>
<dbReference type="InterPro" id="IPR005864">
    <property type="entry name" value="ATP_synth_F0_bsu_bac"/>
</dbReference>
<dbReference type="InterPro" id="IPR050059">
    <property type="entry name" value="ATP_synthase_B_chain"/>
</dbReference>
<dbReference type="NCBIfam" id="TIGR01144">
    <property type="entry name" value="ATP_synt_b"/>
    <property type="match status" value="1"/>
</dbReference>
<dbReference type="NCBIfam" id="NF004411">
    <property type="entry name" value="PRK05759.1-2"/>
    <property type="match status" value="1"/>
</dbReference>
<dbReference type="NCBIfam" id="NF004413">
    <property type="entry name" value="PRK05759.1-4"/>
    <property type="match status" value="1"/>
</dbReference>
<dbReference type="PANTHER" id="PTHR33445:SF1">
    <property type="entry name" value="ATP SYNTHASE SUBUNIT B"/>
    <property type="match status" value="1"/>
</dbReference>
<dbReference type="PANTHER" id="PTHR33445">
    <property type="entry name" value="ATP SYNTHASE SUBUNIT B', CHLOROPLASTIC"/>
    <property type="match status" value="1"/>
</dbReference>
<dbReference type="Pfam" id="PF00430">
    <property type="entry name" value="ATP-synt_B"/>
    <property type="match status" value="1"/>
</dbReference>
<dbReference type="SUPFAM" id="SSF81573">
    <property type="entry name" value="F1F0 ATP synthase subunit B, membrane domain"/>
    <property type="match status" value="1"/>
</dbReference>
<protein>
    <recommendedName>
        <fullName evidence="1">ATP synthase subunit b</fullName>
    </recommendedName>
    <alternativeName>
        <fullName evidence="1">ATP synthase F(0) sector subunit b</fullName>
    </alternativeName>
    <alternativeName>
        <fullName evidence="1">ATPase subunit I</fullName>
    </alternativeName>
    <alternativeName>
        <fullName evidence="1">F-type ATPase subunit b</fullName>
        <shortName evidence="1">F-ATPase subunit b</shortName>
    </alternativeName>
</protein>
<reference key="1">
    <citation type="journal article" date="2004" name="Nat. Genet.">
        <title>Comparison of genome degradation in Paratyphi A and Typhi, human-restricted serovars of Salmonella enterica that cause typhoid.</title>
        <authorList>
            <person name="McClelland M."/>
            <person name="Sanderson K.E."/>
            <person name="Clifton S.W."/>
            <person name="Latreille P."/>
            <person name="Porwollik S."/>
            <person name="Sabo A."/>
            <person name="Meyer R."/>
            <person name="Bieri T."/>
            <person name="Ozersky P."/>
            <person name="McLellan M."/>
            <person name="Harkins C.R."/>
            <person name="Wang C."/>
            <person name="Nguyen C."/>
            <person name="Berghoff A."/>
            <person name="Elliott G."/>
            <person name="Kohlberg S."/>
            <person name="Strong C."/>
            <person name="Du F."/>
            <person name="Carter J."/>
            <person name="Kremizki C."/>
            <person name="Layman D."/>
            <person name="Leonard S."/>
            <person name="Sun H."/>
            <person name="Fulton L."/>
            <person name="Nash W."/>
            <person name="Miner T."/>
            <person name="Minx P."/>
            <person name="Delehaunty K."/>
            <person name="Fronick C."/>
            <person name="Magrini V."/>
            <person name="Nhan M."/>
            <person name="Warren W."/>
            <person name="Florea L."/>
            <person name="Spieth J."/>
            <person name="Wilson R.K."/>
        </authorList>
    </citation>
    <scope>NUCLEOTIDE SEQUENCE [LARGE SCALE GENOMIC DNA]</scope>
    <source>
        <strain>ATCC 9150 / SARB42</strain>
    </source>
</reference>
<proteinExistence type="inferred from homology"/>
<gene>
    <name evidence="1" type="primary">atpF</name>
    <name type="ordered locus">SPA3708</name>
</gene>
<feature type="chain" id="PRO_0000368746" description="ATP synthase subunit b">
    <location>
        <begin position="1"/>
        <end position="156"/>
    </location>
</feature>
<feature type="transmembrane region" description="Helical" evidence="1">
    <location>
        <begin position="11"/>
        <end position="31"/>
    </location>
</feature>
<accession>Q5PKW8</accession>
<name>ATPF_SALPA</name>
<sequence length="156" mass="17365">MNLNATILGQAIAFILFVWFCMKYVWPPLMAAIEKRQKEIADGLASAERAHKDLDLAKASATDQLKKAKAEAQVIIEQANKRRAQILDEAKTEAEQERTKIVAQAQAEIEAERKRAREELRKQVAILAVAGAEKIIERSVDEAANSDIVDKLVAEL</sequence>
<keyword id="KW-0066">ATP synthesis</keyword>
<keyword id="KW-0997">Cell inner membrane</keyword>
<keyword id="KW-1003">Cell membrane</keyword>
<keyword id="KW-0138">CF(0)</keyword>
<keyword id="KW-0375">Hydrogen ion transport</keyword>
<keyword id="KW-0406">Ion transport</keyword>
<keyword id="KW-0472">Membrane</keyword>
<keyword id="KW-0812">Transmembrane</keyword>
<keyword id="KW-1133">Transmembrane helix</keyword>
<keyword id="KW-0813">Transport</keyword>
<organism>
    <name type="scientific">Salmonella paratyphi A (strain ATCC 9150 / SARB42)</name>
    <dbReference type="NCBI Taxonomy" id="295319"/>
    <lineage>
        <taxon>Bacteria</taxon>
        <taxon>Pseudomonadati</taxon>
        <taxon>Pseudomonadota</taxon>
        <taxon>Gammaproteobacteria</taxon>
        <taxon>Enterobacterales</taxon>
        <taxon>Enterobacteriaceae</taxon>
        <taxon>Salmonella</taxon>
    </lineage>
</organism>
<evidence type="ECO:0000255" key="1">
    <source>
        <dbReference type="HAMAP-Rule" id="MF_01398"/>
    </source>
</evidence>